<proteinExistence type="evidence at transcript level"/>
<gene>
    <name type="primary">rbm18</name>
</gene>
<evidence type="ECO:0000255" key="1">
    <source>
        <dbReference type="PROSITE-ProRule" id="PRU00176"/>
    </source>
</evidence>
<organism>
    <name type="scientific">Xenopus laevis</name>
    <name type="common">African clawed frog</name>
    <dbReference type="NCBI Taxonomy" id="8355"/>
    <lineage>
        <taxon>Eukaryota</taxon>
        <taxon>Metazoa</taxon>
        <taxon>Chordata</taxon>
        <taxon>Craniata</taxon>
        <taxon>Vertebrata</taxon>
        <taxon>Euteleostomi</taxon>
        <taxon>Amphibia</taxon>
        <taxon>Batrachia</taxon>
        <taxon>Anura</taxon>
        <taxon>Pipoidea</taxon>
        <taxon>Pipidae</taxon>
        <taxon>Xenopodinae</taxon>
        <taxon>Xenopus</taxon>
        <taxon>Xenopus</taxon>
    </lineage>
</organism>
<accession>Q66J99</accession>
<keyword id="KW-1185">Reference proteome</keyword>
<keyword id="KW-0694">RNA-binding</keyword>
<reference key="1">
    <citation type="submission" date="2004-08" db="EMBL/GenBank/DDBJ databases">
        <authorList>
            <consortium name="NIH - Xenopus Gene Collection (XGC) project"/>
        </authorList>
    </citation>
    <scope>NUCLEOTIDE SEQUENCE [LARGE SCALE MRNA]</scope>
    <source>
        <tissue>Embryo</tissue>
    </source>
</reference>
<sequence>MEHNTNMLPLENASILSEGSLQDGHRLWIGNVDPKITEYHLLKLLQKFGKVKQFDFLFHKSGPLEGQPRGYCFVNFETKAEAERAIHCLNGKMALSKKLVVRWAHAQIKRYDNCKNEKVLPISLEPSSSTEPTQSTLSVSAKIKAIEAKLKMMAENPDPLLPGQSSYSYFKANEKKKCTPYHKSSLKSKR</sequence>
<dbReference type="EMBL" id="BC081007">
    <property type="protein sequence ID" value="AAH81007.1"/>
    <property type="molecule type" value="mRNA"/>
</dbReference>
<dbReference type="RefSeq" id="NP_001087622.1">
    <property type="nucleotide sequence ID" value="NM_001094153.1"/>
</dbReference>
<dbReference type="RefSeq" id="XP_018084533.1">
    <property type="nucleotide sequence ID" value="XM_018229044.1"/>
</dbReference>
<dbReference type="SMR" id="Q66J99"/>
<dbReference type="DNASU" id="447446"/>
<dbReference type="GeneID" id="447446"/>
<dbReference type="KEGG" id="xla:447446"/>
<dbReference type="AGR" id="Xenbase:XB-GENE-6253870"/>
<dbReference type="CTD" id="447446"/>
<dbReference type="Xenbase" id="XB-GENE-6253870">
    <property type="gene designation" value="rbm18.L"/>
</dbReference>
<dbReference type="OMA" id="FACGRPL"/>
<dbReference type="OrthoDB" id="6730379at2759"/>
<dbReference type="Proteomes" id="UP000186698">
    <property type="component" value="Chromosome 8L"/>
</dbReference>
<dbReference type="Bgee" id="447446">
    <property type="expression patterns" value="Expressed in gastrula and 19 other cell types or tissues"/>
</dbReference>
<dbReference type="GO" id="GO:0003723">
    <property type="term" value="F:RNA binding"/>
    <property type="evidence" value="ECO:0000318"/>
    <property type="project" value="GO_Central"/>
</dbReference>
<dbReference type="CDD" id="cd12355">
    <property type="entry name" value="RRM_RBM18"/>
    <property type="match status" value="1"/>
</dbReference>
<dbReference type="FunFam" id="3.30.70.330:FF:000185">
    <property type="entry name" value="Probable RNA-binding protein 18"/>
    <property type="match status" value="1"/>
</dbReference>
<dbReference type="Gene3D" id="3.30.70.330">
    <property type="match status" value="1"/>
</dbReference>
<dbReference type="InterPro" id="IPR012677">
    <property type="entry name" value="Nucleotide-bd_a/b_plait_sf"/>
</dbReference>
<dbReference type="InterPro" id="IPR035979">
    <property type="entry name" value="RBD_domain_sf"/>
</dbReference>
<dbReference type="InterPro" id="IPR039157">
    <property type="entry name" value="RBM18_RRM"/>
</dbReference>
<dbReference type="InterPro" id="IPR000504">
    <property type="entry name" value="RRM_dom"/>
</dbReference>
<dbReference type="PANTHER" id="PTHR21245">
    <property type="entry name" value="HETEROGENEOUS NUCLEAR RIBONUCLEOPROTEIN"/>
    <property type="match status" value="1"/>
</dbReference>
<dbReference type="Pfam" id="PF00076">
    <property type="entry name" value="RRM_1"/>
    <property type="match status" value="1"/>
</dbReference>
<dbReference type="SMART" id="SM00360">
    <property type="entry name" value="RRM"/>
    <property type="match status" value="1"/>
</dbReference>
<dbReference type="SUPFAM" id="SSF54928">
    <property type="entry name" value="RNA-binding domain, RBD"/>
    <property type="match status" value="1"/>
</dbReference>
<dbReference type="PROSITE" id="PS50102">
    <property type="entry name" value="RRM"/>
    <property type="match status" value="1"/>
</dbReference>
<protein>
    <recommendedName>
        <fullName>Probable RNA-binding protein 18</fullName>
    </recommendedName>
    <alternativeName>
        <fullName>RNA-binding motif protein 18</fullName>
    </alternativeName>
</protein>
<feature type="chain" id="PRO_0000254126" description="Probable RNA-binding protein 18">
    <location>
        <begin position="1"/>
        <end position="190"/>
    </location>
</feature>
<feature type="domain" description="RRM" evidence="1">
    <location>
        <begin position="25"/>
        <end position="106"/>
    </location>
</feature>
<name>RBM18_XENLA</name>